<comment type="subcellular location">
    <subcellularLocation>
        <location evidence="1">Cell inner membrane</location>
        <topology evidence="1">Multi-pass membrane protein</topology>
    </subcellularLocation>
</comment>
<comment type="similarity">
    <text evidence="1">Belongs to the UPF0259 family.</text>
</comment>
<protein>
    <recommendedName>
        <fullName evidence="1">UPF0259 membrane protein YciC</fullName>
    </recommendedName>
</protein>
<name>YCIC_ECO55</name>
<accession>B7LHK1</accession>
<reference key="1">
    <citation type="journal article" date="2009" name="PLoS Genet.">
        <title>Organised genome dynamics in the Escherichia coli species results in highly diverse adaptive paths.</title>
        <authorList>
            <person name="Touchon M."/>
            <person name="Hoede C."/>
            <person name="Tenaillon O."/>
            <person name="Barbe V."/>
            <person name="Baeriswyl S."/>
            <person name="Bidet P."/>
            <person name="Bingen E."/>
            <person name="Bonacorsi S."/>
            <person name="Bouchier C."/>
            <person name="Bouvet O."/>
            <person name="Calteau A."/>
            <person name="Chiapello H."/>
            <person name="Clermont O."/>
            <person name="Cruveiller S."/>
            <person name="Danchin A."/>
            <person name="Diard M."/>
            <person name="Dossat C."/>
            <person name="Karoui M.E."/>
            <person name="Frapy E."/>
            <person name="Garry L."/>
            <person name="Ghigo J.M."/>
            <person name="Gilles A.M."/>
            <person name="Johnson J."/>
            <person name="Le Bouguenec C."/>
            <person name="Lescat M."/>
            <person name="Mangenot S."/>
            <person name="Martinez-Jehanne V."/>
            <person name="Matic I."/>
            <person name="Nassif X."/>
            <person name="Oztas S."/>
            <person name="Petit M.A."/>
            <person name="Pichon C."/>
            <person name="Rouy Z."/>
            <person name="Ruf C.S."/>
            <person name="Schneider D."/>
            <person name="Tourret J."/>
            <person name="Vacherie B."/>
            <person name="Vallenet D."/>
            <person name="Medigue C."/>
            <person name="Rocha E.P.C."/>
            <person name="Denamur E."/>
        </authorList>
    </citation>
    <scope>NUCLEOTIDE SEQUENCE [LARGE SCALE GENOMIC DNA]</scope>
    <source>
        <strain>55989 / EAEC</strain>
    </source>
</reference>
<evidence type="ECO:0000255" key="1">
    <source>
        <dbReference type="HAMAP-Rule" id="MF_01067"/>
    </source>
</evidence>
<organism>
    <name type="scientific">Escherichia coli (strain 55989 / EAEC)</name>
    <dbReference type="NCBI Taxonomy" id="585055"/>
    <lineage>
        <taxon>Bacteria</taxon>
        <taxon>Pseudomonadati</taxon>
        <taxon>Pseudomonadota</taxon>
        <taxon>Gammaproteobacteria</taxon>
        <taxon>Enterobacterales</taxon>
        <taxon>Enterobacteriaceae</taxon>
        <taxon>Escherichia</taxon>
    </lineage>
</organism>
<keyword id="KW-0997">Cell inner membrane</keyword>
<keyword id="KW-1003">Cell membrane</keyword>
<keyword id="KW-0472">Membrane</keyword>
<keyword id="KW-1185">Reference proteome</keyword>
<keyword id="KW-0812">Transmembrane</keyword>
<keyword id="KW-1133">Transmembrane helix</keyword>
<feature type="chain" id="PRO_1000149742" description="UPF0259 membrane protein YciC">
    <location>
        <begin position="1"/>
        <end position="247"/>
    </location>
</feature>
<feature type="transmembrane region" description="Helical" evidence="1">
    <location>
        <begin position="20"/>
        <end position="40"/>
    </location>
</feature>
<feature type="transmembrane region" description="Helical" evidence="1">
    <location>
        <begin position="87"/>
        <end position="107"/>
    </location>
</feature>
<feature type="transmembrane region" description="Helical" evidence="1">
    <location>
        <begin position="118"/>
        <end position="140"/>
    </location>
</feature>
<feature type="transmembrane region" description="Helical" evidence="1">
    <location>
        <begin position="152"/>
        <end position="172"/>
    </location>
</feature>
<feature type="transmembrane region" description="Helical" evidence="1">
    <location>
        <begin position="187"/>
        <end position="209"/>
    </location>
</feature>
<feature type="transmembrane region" description="Helical" evidence="1">
    <location>
        <begin position="225"/>
        <end position="245"/>
    </location>
</feature>
<gene>
    <name evidence="1" type="primary">yciC</name>
    <name type="ordered locus">EC55989_1353</name>
</gene>
<proteinExistence type="inferred from homology"/>
<dbReference type="EMBL" id="CU928145">
    <property type="protein sequence ID" value="CAU97211.1"/>
    <property type="molecule type" value="Genomic_DNA"/>
</dbReference>
<dbReference type="RefSeq" id="WP_000028540.1">
    <property type="nucleotide sequence ID" value="NC_011748.1"/>
</dbReference>
<dbReference type="KEGG" id="eck:EC55989_1353"/>
<dbReference type="HOGENOM" id="CLU_073287_0_0_6"/>
<dbReference type="Proteomes" id="UP000000746">
    <property type="component" value="Chromosome"/>
</dbReference>
<dbReference type="GO" id="GO:0005886">
    <property type="term" value="C:plasma membrane"/>
    <property type="evidence" value="ECO:0007669"/>
    <property type="project" value="UniProtKB-SubCell"/>
</dbReference>
<dbReference type="HAMAP" id="MF_01067">
    <property type="entry name" value="UPF0259"/>
    <property type="match status" value="1"/>
</dbReference>
<dbReference type="InterPro" id="IPR009627">
    <property type="entry name" value="UPF0259"/>
</dbReference>
<dbReference type="NCBIfam" id="NF002774">
    <property type="entry name" value="PRK02868.1"/>
    <property type="match status" value="1"/>
</dbReference>
<dbReference type="Pfam" id="PF06790">
    <property type="entry name" value="UPF0259"/>
    <property type="match status" value="1"/>
</dbReference>
<sequence>MSITAQSVYRDTGNFFRNQFMTILLVSLLCAFITVVLGHVFSPSDAQLAQLNDGVPVSGSSGLFDLVQNMSPEQQQILLQASAASTFSGLIGNAILAGGVILIIQLVSAGQRVSALRAIGASAPILPKLFILIFLTTLLVQIGIMLVVVPGIIMAILLALAPVMLVQDKMGIFASMRSSMRLTWANMRLVAPAVLSWLLAKTLLLLFASSFAALTPEIGAVLANTLSNLISAILLIYLFRLYMLIRQ</sequence>